<name>OPGH_RHOPT</name>
<accession>B3Q6L4</accession>
<keyword id="KW-0997">Cell inner membrane</keyword>
<keyword id="KW-1003">Cell membrane</keyword>
<keyword id="KW-0328">Glycosyltransferase</keyword>
<keyword id="KW-0472">Membrane</keyword>
<keyword id="KW-0808">Transferase</keyword>
<keyword id="KW-0812">Transmembrane</keyword>
<keyword id="KW-1133">Transmembrane helix</keyword>
<feature type="chain" id="PRO_1000136659" description="Glucans biosynthesis glucosyltransferase H">
    <location>
        <begin position="1"/>
        <end position="721"/>
    </location>
</feature>
<feature type="transmembrane region" description="Helical" evidence="1">
    <location>
        <begin position="54"/>
        <end position="74"/>
    </location>
</feature>
<feature type="transmembrane region" description="Helical" evidence="1">
    <location>
        <begin position="85"/>
        <end position="105"/>
    </location>
</feature>
<feature type="transmembrane region" description="Helical" evidence="1">
    <location>
        <begin position="404"/>
        <end position="424"/>
    </location>
</feature>
<feature type="transmembrane region" description="Helical" evidence="1">
    <location>
        <begin position="458"/>
        <end position="478"/>
    </location>
</feature>
<feature type="transmembrane region" description="Helical" evidence="1">
    <location>
        <begin position="493"/>
        <end position="513"/>
    </location>
</feature>
<feature type="transmembrane region" description="Helical" evidence="1">
    <location>
        <begin position="548"/>
        <end position="568"/>
    </location>
</feature>
<feature type="transmembrane region" description="Helical" evidence="1">
    <location>
        <begin position="569"/>
        <end position="589"/>
    </location>
</feature>
<protein>
    <recommendedName>
        <fullName evidence="1">Glucans biosynthesis glucosyltransferase H</fullName>
        <ecNumber evidence="1">2.4.1.-</ecNumber>
    </recommendedName>
</protein>
<reference key="1">
    <citation type="submission" date="2008-05" db="EMBL/GenBank/DDBJ databases">
        <title>Complete sequence of Rhodopseudomonas palustris TIE-1.</title>
        <authorList>
            <consortium name="US DOE Joint Genome Institute"/>
            <person name="Lucas S."/>
            <person name="Copeland A."/>
            <person name="Lapidus A."/>
            <person name="Glavina del Rio T."/>
            <person name="Dalin E."/>
            <person name="Tice H."/>
            <person name="Pitluck S."/>
            <person name="Chain P."/>
            <person name="Malfatti S."/>
            <person name="Shin M."/>
            <person name="Vergez L."/>
            <person name="Lang D."/>
            <person name="Schmutz J."/>
            <person name="Larimer F."/>
            <person name="Land M."/>
            <person name="Hauser L."/>
            <person name="Kyrpides N."/>
            <person name="Mikhailova N."/>
            <person name="Emerson D."/>
            <person name="Newman D.K."/>
            <person name="Roden E."/>
            <person name="Richardson P."/>
        </authorList>
    </citation>
    <scope>NUCLEOTIDE SEQUENCE [LARGE SCALE GENOMIC DNA]</scope>
    <source>
        <strain>TIE-1</strain>
    </source>
</reference>
<proteinExistence type="inferred from homology"/>
<evidence type="ECO:0000255" key="1">
    <source>
        <dbReference type="HAMAP-Rule" id="MF_01072"/>
    </source>
</evidence>
<sequence length="721" mass="78953">MDAVIAPRHEDCRDAERRAEPLPANAPLSMPVQSLLQSPQAAAVRSPAAWRRALIMVATAVLSAAGIYEMYQVLQVGGITVLEGVVLVLFAALFAWVALSFVSALAGFTVLCCGWRDDVGIMPDGSMPAVSSKIAMLLPTYNEDAPVVFARLQATRQSVDETGRGAQFDWFVLSDSTDPSVWIDEERCYAELAATHDRLYYRHRPYNTARKSGNIADWVERFGGAYDFMVILDADSVMTGDVLVRIAAAMETNSDVGLIQTLPVVVQARTLFARVQQFAGSIYGPMIAAGTAWWHGSESNYWGHNAIIRVSAFAGSAGLPTLAGRKPFGGEILSHDFVEAALMRRGGWRIHLAPTLRGSYEECPPSLLDFAARDRRWCQGNLQHGKLLTARGLHWVSRLHFLTGIGAYLTAPMWLAFLVAGILISLQAQFVRPEYFPKDFSLFPIWPAQDPVRAAWVFAGTMGLLILPKLLALLLVLIRSQTRRRFGGGLRTFGGVLLETMISALTAPVMMVFQSTAVIEILLGRDAGWQVQHRGDGAIPLREVVRRYALPTALGATMAVGAWLVSWPLLLWMTPVIVGLLLAIPVALLTTRVSRSRPLLMTTPEQIDPPAILAQVHALADRLRPANQTTDPLSALCSDRRLRELHLAALAFHPPRRRGRIDPHLATARVLIDDAESYSEAAGWLGPREIRAVLGDRETLQRLLKLSGEHAQLAVGSEPSG</sequence>
<comment type="function">
    <text evidence="1">Involved in the biosynthesis of osmoregulated periplasmic glucans (OPGs).</text>
</comment>
<comment type="pathway">
    <text evidence="1">Glycan metabolism; osmoregulated periplasmic glucan (OPG) biosynthesis.</text>
</comment>
<comment type="subcellular location">
    <subcellularLocation>
        <location evidence="1">Cell inner membrane</location>
        <topology evidence="1">Multi-pass membrane protein</topology>
    </subcellularLocation>
</comment>
<comment type="similarity">
    <text evidence="1">Belongs to the glycosyltransferase 2 family. OpgH subfamily.</text>
</comment>
<organism>
    <name type="scientific">Rhodopseudomonas palustris (strain TIE-1)</name>
    <dbReference type="NCBI Taxonomy" id="395960"/>
    <lineage>
        <taxon>Bacteria</taxon>
        <taxon>Pseudomonadati</taxon>
        <taxon>Pseudomonadota</taxon>
        <taxon>Alphaproteobacteria</taxon>
        <taxon>Hyphomicrobiales</taxon>
        <taxon>Nitrobacteraceae</taxon>
        <taxon>Rhodopseudomonas</taxon>
    </lineage>
</organism>
<dbReference type="EC" id="2.4.1.-" evidence="1"/>
<dbReference type="EMBL" id="CP001096">
    <property type="protein sequence ID" value="ACF01723.1"/>
    <property type="molecule type" value="Genomic_DNA"/>
</dbReference>
<dbReference type="RefSeq" id="WP_012496322.1">
    <property type="nucleotide sequence ID" value="NC_011004.1"/>
</dbReference>
<dbReference type="SMR" id="B3Q6L4"/>
<dbReference type="CAZy" id="GT2">
    <property type="family name" value="Glycosyltransferase Family 2"/>
</dbReference>
<dbReference type="KEGG" id="rpt:Rpal_3221"/>
<dbReference type="HOGENOM" id="CLU_015730_1_0_5"/>
<dbReference type="OrthoDB" id="9775281at2"/>
<dbReference type="UniPathway" id="UPA00637"/>
<dbReference type="Proteomes" id="UP000001725">
    <property type="component" value="Chromosome"/>
</dbReference>
<dbReference type="GO" id="GO:0005886">
    <property type="term" value="C:plasma membrane"/>
    <property type="evidence" value="ECO:0007669"/>
    <property type="project" value="UniProtKB-SubCell"/>
</dbReference>
<dbReference type="GO" id="GO:0016758">
    <property type="term" value="F:hexosyltransferase activity"/>
    <property type="evidence" value="ECO:0007669"/>
    <property type="project" value="UniProtKB-UniRule"/>
</dbReference>
<dbReference type="GO" id="GO:0009250">
    <property type="term" value="P:glucan biosynthetic process"/>
    <property type="evidence" value="ECO:0007669"/>
    <property type="project" value="UniProtKB-UniRule"/>
</dbReference>
<dbReference type="CDD" id="cd04191">
    <property type="entry name" value="Glucan_BSP_MdoH"/>
    <property type="match status" value="1"/>
</dbReference>
<dbReference type="Gene3D" id="3.90.550.10">
    <property type="entry name" value="Spore Coat Polysaccharide Biosynthesis Protein SpsA, Chain A"/>
    <property type="match status" value="1"/>
</dbReference>
<dbReference type="HAMAP" id="MF_01072">
    <property type="entry name" value="MdoH_OpgH"/>
    <property type="match status" value="1"/>
</dbReference>
<dbReference type="InterPro" id="IPR023725">
    <property type="entry name" value="Glucans_biosynth_gluTrFase_H"/>
</dbReference>
<dbReference type="InterPro" id="IPR001173">
    <property type="entry name" value="Glyco_trans_2-like"/>
</dbReference>
<dbReference type="InterPro" id="IPR050321">
    <property type="entry name" value="Glycosyltr_2/OpgH_subfam"/>
</dbReference>
<dbReference type="InterPro" id="IPR029044">
    <property type="entry name" value="Nucleotide-diphossugar_trans"/>
</dbReference>
<dbReference type="NCBIfam" id="NF003956">
    <property type="entry name" value="PRK05454.1-3"/>
    <property type="match status" value="1"/>
</dbReference>
<dbReference type="NCBIfam" id="NF003958">
    <property type="entry name" value="PRK05454.2-1"/>
    <property type="match status" value="1"/>
</dbReference>
<dbReference type="NCBIfam" id="NF003962">
    <property type="entry name" value="PRK05454.2-5"/>
    <property type="match status" value="1"/>
</dbReference>
<dbReference type="PANTHER" id="PTHR43867">
    <property type="entry name" value="CELLULOSE SYNTHASE CATALYTIC SUBUNIT A [UDP-FORMING]"/>
    <property type="match status" value="1"/>
</dbReference>
<dbReference type="PANTHER" id="PTHR43867:SF5">
    <property type="entry name" value="GLUCANS BIOSYNTHESIS GLUCOSYLTRANSFERASE H"/>
    <property type="match status" value="1"/>
</dbReference>
<dbReference type="Pfam" id="PF13632">
    <property type="entry name" value="Glyco_trans_2_3"/>
    <property type="match status" value="1"/>
</dbReference>
<dbReference type="SUPFAM" id="SSF53448">
    <property type="entry name" value="Nucleotide-diphospho-sugar transferases"/>
    <property type="match status" value="1"/>
</dbReference>
<gene>
    <name evidence="1" type="primary">opgH</name>
    <name type="ordered locus">Rpal_3221</name>
</gene>